<sequence length="762" mass="86768">MDVSALLTSAGINIAICVVLVSLYSILRKQPANYCVYFGRLLSDGRVKRHDPRWYERFAPSPSWLVKAWETTEEEMLAAAGLDAVVFIRMVICSIRIFSIVAVVCLAFVLPVNYYGQKMEHKEVHLESLGVFTIENLNPRSRWLWVHCLSLYIISSAACALLYFEYKNIAKKRLAHISGSASKPSHFTVLIRAIPQSPDQSYSETVSKYFTNYYAPSYVSHLMVYRDGFIHRLMNETERMCQAIKHVSPDLSCNPSLKSCVLCGPAATNSFQIISNETDSVKGLELGELTLTTTEEERPVAFVFFKSRYDALVVSEVLQTPNPMLWVADLAPEPHDVHWRNLRIPYRQLWMRRIATLVGAIAFMFVFLFPVTFVQGLTQLPTLSKNFPFLKDLLNRRFMEQVITGYLPSVILVLFFYTVPPLMMYFSTLEGCVSRSQRKKSACLKILYFTIWNVFFVNILSGSVIRQFTVLNSVRDVPAQLAKLVPAQAGFFMTYCFTSGWAGLACEIMQPVGLIWNLIAKVIVKNKEESYETLRFPYHTEIPRLLLFGLLGFTNSVIAPLILPFLLIYFFFAYLIYKNQIINVYITKYESGGQYWPVFHNTTIFSLILSQVIALGFFGLKLSTVASGFTIPLILLTLLFSEYCRQRFAPIFQKYPAEILIAMDRADEMTGKMEEIHNNLKVAYSQIPTCSEESSKAGCTSPCSDQELPDSEELKPEKENLKADYIWEFQRSKSGLDLEVKSCPSASPIRNSPGFAEIYKRT</sequence>
<comment type="function">
    <text evidence="1">Acts as an osmosensitive calcium-permeable cation channel.</text>
</comment>
<comment type="subcellular location">
    <subcellularLocation>
        <location evidence="4">Membrane</location>
        <topology evidence="4">Multi-pass membrane protein</topology>
    </subcellularLocation>
</comment>
<comment type="similarity">
    <text evidence="4">Belongs to the CSC1 (TC 1.A.17) family.</text>
</comment>
<comment type="sequence caution" evidence="4">
    <conflict type="erroneous gene model prediction">
        <sequence resource="EMBL-CDS" id="AAC34338"/>
    </conflict>
</comment>
<dbReference type="EMBL" id="AC004122">
    <property type="protein sequence ID" value="AAC34338.1"/>
    <property type="status" value="ALT_SEQ"/>
    <property type="molecule type" value="Genomic_DNA"/>
</dbReference>
<dbReference type="EMBL" id="CP002684">
    <property type="protein sequence ID" value="AEE28540.1"/>
    <property type="molecule type" value="Genomic_DNA"/>
</dbReference>
<dbReference type="EMBL" id="AY049273">
    <property type="protein sequence ID" value="AAK83615.1"/>
    <property type="molecule type" value="mRNA"/>
</dbReference>
<dbReference type="EMBL" id="AK175567">
    <property type="protein sequence ID" value="BAD43330.1"/>
    <property type="molecule type" value="mRNA"/>
</dbReference>
<dbReference type="EMBL" id="AK176422">
    <property type="protein sequence ID" value="BAD44185.1"/>
    <property type="molecule type" value="mRNA"/>
</dbReference>
<dbReference type="EMBL" id="AK176455">
    <property type="protein sequence ID" value="BAD44218.1"/>
    <property type="molecule type" value="mRNA"/>
</dbReference>
<dbReference type="EMBL" id="AY086862">
    <property type="protein sequence ID" value="AAM63909.1"/>
    <property type="molecule type" value="mRNA"/>
</dbReference>
<dbReference type="PIR" id="T00627">
    <property type="entry name" value="T00627"/>
</dbReference>
<dbReference type="RefSeq" id="NP_172480.2">
    <property type="nucleotide sequence ID" value="NM_100883.3"/>
</dbReference>
<dbReference type="SMR" id="Q94A87"/>
<dbReference type="BioGRID" id="22784">
    <property type="interactions" value="4"/>
</dbReference>
<dbReference type="FunCoup" id="Q94A87">
    <property type="interactions" value="799"/>
</dbReference>
<dbReference type="IntAct" id="Q94A87">
    <property type="interactions" value="4"/>
</dbReference>
<dbReference type="STRING" id="3702.Q94A87"/>
<dbReference type="iPTMnet" id="Q94A87"/>
<dbReference type="PaxDb" id="3702-AT1G10090.1"/>
<dbReference type="ProteomicsDB" id="220351"/>
<dbReference type="EnsemblPlants" id="AT1G10090.1">
    <property type="protein sequence ID" value="AT1G10090.1"/>
    <property type="gene ID" value="AT1G10090"/>
</dbReference>
<dbReference type="GeneID" id="837544"/>
<dbReference type="Gramene" id="AT1G10090.1">
    <property type="protein sequence ID" value="AT1G10090.1"/>
    <property type="gene ID" value="AT1G10090"/>
</dbReference>
<dbReference type="KEGG" id="ath:AT1G10090"/>
<dbReference type="Araport" id="AT1G10090"/>
<dbReference type="TAIR" id="AT1G10090"/>
<dbReference type="eggNOG" id="KOG1134">
    <property type="taxonomic scope" value="Eukaryota"/>
</dbReference>
<dbReference type="HOGENOM" id="CLU_002458_7_2_1"/>
<dbReference type="InParanoid" id="Q94A87"/>
<dbReference type="OMA" id="RMCQAIK"/>
<dbReference type="OrthoDB" id="1689567at2759"/>
<dbReference type="PhylomeDB" id="Q94A87"/>
<dbReference type="PRO" id="PR:Q94A87"/>
<dbReference type="Proteomes" id="UP000006548">
    <property type="component" value="Chromosome 1"/>
</dbReference>
<dbReference type="ExpressionAtlas" id="Q94A87">
    <property type="expression patterns" value="baseline and differential"/>
</dbReference>
<dbReference type="GO" id="GO:0016020">
    <property type="term" value="C:membrane"/>
    <property type="evidence" value="ECO:0007669"/>
    <property type="project" value="UniProtKB-SubCell"/>
</dbReference>
<dbReference type="GO" id="GO:0005227">
    <property type="term" value="F:calcium-activated cation channel activity"/>
    <property type="evidence" value="ECO:0007669"/>
    <property type="project" value="InterPro"/>
</dbReference>
<dbReference type="InterPro" id="IPR045122">
    <property type="entry name" value="Csc1-like"/>
</dbReference>
<dbReference type="InterPro" id="IPR003864">
    <property type="entry name" value="CSC1/OSCA1-like_7TM"/>
</dbReference>
<dbReference type="InterPro" id="IPR027815">
    <property type="entry name" value="CSC1/OSCA1-like_cyt"/>
</dbReference>
<dbReference type="InterPro" id="IPR032880">
    <property type="entry name" value="Csc1/OSCA1-like_N"/>
</dbReference>
<dbReference type="PANTHER" id="PTHR13018:SF110">
    <property type="entry name" value="CSC1-LIKE PROTEIN"/>
    <property type="match status" value="1"/>
</dbReference>
<dbReference type="PANTHER" id="PTHR13018">
    <property type="entry name" value="PROBABLE MEMBRANE PROTEIN DUF221-RELATED"/>
    <property type="match status" value="1"/>
</dbReference>
<dbReference type="Pfam" id="PF14703">
    <property type="entry name" value="PHM7_cyt"/>
    <property type="match status" value="1"/>
</dbReference>
<dbReference type="Pfam" id="PF02714">
    <property type="entry name" value="RSN1_7TM"/>
    <property type="match status" value="1"/>
</dbReference>
<dbReference type="Pfam" id="PF13967">
    <property type="entry name" value="RSN1_TM"/>
    <property type="match status" value="1"/>
</dbReference>
<keyword id="KW-0106">Calcium</keyword>
<keyword id="KW-0407">Ion channel</keyword>
<keyword id="KW-0406">Ion transport</keyword>
<keyword id="KW-0472">Membrane</keyword>
<keyword id="KW-1185">Reference proteome</keyword>
<keyword id="KW-0812">Transmembrane</keyword>
<keyword id="KW-1133">Transmembrane helix</keyword>
<keyword id="KW-0813">Transport</keyword>
<gene>
    <name evidence="3" type="primary">OSCA2.2</name>
    <name type="ordered locus">At1g10090</name>
    <name type="ORF">T27I1.10</name>
</gene>
<proteinExistence type="evidence at protein level"/>
<reference key="1">
    <citation type="journal article" date="2000" name="Nature">
        <title>Sequence and analysis of chromosome 1 of the plant Arabidopsis thaliana.</title>
        <authorList>
            <person name="Theologis A."/>
            <person name="Ecker J.R."/>
            <person name="Palm C.J."/>
            <person name="Federspiel N.A."/>
            <person name="Kaul S."/>
            <person name="White O."/>
            <person name="Alonso J."/>
            <person name="Altafi H."/>
            <person name="Araujo R."/>
            <person name="Bowman C.L."/>
            <person name="Brooks S.Y."/>
            <person name="Buehler E."/>
            <person name="Chan A."/>
            <person name="Chao Q."/>
            <person name="Chen H."/>
            <person name="Cheuk R.F."/>
            <person name="Chin C.W."/>
            <person name="Chung M.K."/>
            <person name="Conn L."/>
            <person name="Conway A.B."/>
            <person name="Conway A.R."/>
            <person name="Creasy T.H."/>
            <person name="Dewar K."/>
            <person name="Dunn P."/>
            <person name="Etgu P."/>
            <person name="Feldblyum T.V."/>
            <person name="Feng J.-D."/>
            <person name="Fong B."/>
            <person name="Fujii C.Y."/>
            <person name="Gill J.E."/>
            <person name="Goldsmith A.D."/>
            <person name="Haas B."/>
            <person name="Hansen N.F."/>
            <person name="Hughes B."/>
            <person name="Huizar L."/>
            <person name="Hunter J.L."/>
            <person name="Jenkins J."/>
            <person name="Johnson-Hopson C."/>
            <person name="Khan S."/>
            <person name="Khaykin E."/>
            <person name="Kim C.J."/>
            <person name="Koo H.L."/>
            <person name="Kremenetskaia I."/>
            <person name="Kurtz D.B."/>
            <person name="Kwan A."/>
            <person name="Lam B."/>
            <person name="Langin-Hooper S."/>
            <person name="Lee A."/>
            <person name="Lee J.M."/>
            <person name="Lenz C.A."/>
            <person name="Li J.H."/>
            <person name="Li Y.-P."/>
            <person name="Lin X."/>
            <person name="Liu S.X."/>
            <person name="Liu Z.A."/>
            <person name="Luros J.S."/>
            <person name="Maiti R."/>
            <person name="Marziali A."/>
            <person name="Militscher J."/>
            <person name="Miranda M."/>
            <person name="Nguyen M."/>
            <person name="Nierman W.C."/>
            <person name="Osborne B.I."/>
            <person name="Pai G."/>
            <person name="Peterson J."/>
            <person name="Pham P.K."/>
            <person name="Rizzo M."/>
            <person name="Rooney T."/>
            <person name="Rowley D."/>
            <person name="Sakano H."/>
            <person name="Salzberg S.L."/>
            <person name="Schwartz J.R."/>
            <person name="Shinn P."/>
            <person name="Southwick A.M."/>
            <person name="Sun H."/>
            <person name="Tallon L.J."/>
            <person name="Tambunga G."/>
            <person name="Toriumi M.J."/>
            <person name="Town C.D."/>
            <person name="Utterback T."/>
            <person name="Van Aken S."/>
            <person name="Vaysberg M."/>
            <person name="Vysotskaia V.S."/>
            <person name="Walker M."/>
            <person name="Wu D."/>
            <person name="Yu G."/>
            <person name="Fraser C.M."/>
            <person name="Venter J.C."/>
            <person name="Davis R.W."/>
        </authorList>
    </citation>
    <scope>NUCLEOTIDE SEQUENCE [LARGE SCALE GENOMIC DNA]</scope>
    <source>
        <strain>cv. Columbia</strain>
    </source>
</reference>
<reference key="2">
    <citation type="journal article" date="2017" name="Plant J.">
        <title>Araport11: a complete reannotation of the Arabidopsis thaliana reference genome.</title>
        <authorList>
            <person name="Cheng C.Y."/>
            <person name="Krishnakumar V."/>
            <person name="Chan A.P."/>
            <person name="Thibaud-Nissen F."/>
            <person name="Schobel S."/>
            <person name="Town C.D."/>
        </authorList>
    </citation>
    <scope>GENOME REANNOTATION</scope>
    <source>
        <strain>cv. Columbia</strain>
    </source>
</reference>
<reference key="3">
    <citation type="journal article" date="2003" name="Science">
        <title>Empirical analysis of transcriptional activity in the Arabidopsis genome.</title>
        <authorList>
            <person name="Yamada K."/>
            <person name="Lim J."/>
            <person name="Dale J.M."/>
            <person name="Chen H."/>
            <person name="Shinn P."/>
            <person name="Palm C.J."/>
            <person name="Southwick A.M."/>
            <person name="Wu H.C."/>
            <person name="Kim C.J."/>
            <person name="Nguyen M."/>
            <person name="Pham P.K."/>
            <person name="Cheuk R.F."/>
            <person name="Karlin-Newmann G."/>
            <person name="Liu S.X."/>
            <person name="Lam B."/>
            <person name="Sakano H."/>
            <person name="Wu T."/>
            <person name="Yu G."/>
            <person name="Miranda M."/>
            <person name="Quach H.L."/>
            <person name="Tripp M."/>
            <person name="Chang C.H."/>
            <person name="Lee J.M."/>
            <person name="Toriumi M.J."/>
            <person name="Chan M.M."/>
            <person name="Tang C.C."/>
            <person name="Onodera C.S."/>
            <person name="Deng J.M."/>
            <person name="Akiyama K."/>
            <person name="Ansari Y."/>
            <person name="Arakawa T."/>
            <person name="Banh J."/>
            <person name="Banno F."/>
            <person name="Bowser L."/>
            <person name="Brooks S.Y."/>
            <person name="Carninci P."/>
            <person name="Chao Q."/>
            <person name="Choy N."/>
            <person name="Enju A."/>
            <person name="Goldsmith A.D."/>
            <person name="Gurjal M."/>
            <person name="Hansen N.F."/>
            <person name="Hayashizaki Y."/>
            <person name="Johnson-Hopson C."/>
            <person name="Hsuan V.W."/>
            <person name="Iida K."/>
            <person name="Karnes M."/>
            <person name="Khan S."/>
            <person name="Koesema E."/>
            <person name="Ishida J."/>
            <person name="Jiang P.X."/>
            <person name="Jones T."/>
            <person name="Kawai J."/>
            <person name="Kamiya A."/>
            <person name="Meyers C."/>
            <person name="Nakajima M."/>
            <person name="Narusaka M."/>
            <person name="Seki M."/>
            <person name="Sakurai T."/>
            <person name="Satou M."/>
            <person name="Tamse R."/>
            <person name="Vaysberg M."/>
            <person name="Wallender E.K."/>
            <person name="Wong C."/>
            <person name="Yamamura Y."/>
            <person name="Yuan S."/>
            <person name="Shinozaki K."/>
            <person name="Davis R.W."/>
            <person name="Theologis A."/>
            <person name="Ecker J.R."/>
        </authorList>
    </citation>
    <scope>NUCLEOTIDE SEQUENCE [LARGE SCALE MRNA]</scope>
    <source>
        <strain>cv. Columbia</strain>
    </source>
</reference>
<reference key="4">
    <citation type="submission" date="2004-09" db="EMBL/GenBank/DDBJ databases">
        <title>Large-scale analysis of RIKEN Arabidopsis full-length (RAFL) cDNAs.</title>
        <authorList>
            <person name="Totoki Y."/>
            <person name="Seki M."/>
            <person name="Ishida J."/>
            <person name="Nakajima M."/>
            <person name="Enju A."/>
            <person name="Kamiya A."/>
            <person name="Narusaka M."/>
            <person name="Shin-i T."/>
            <person name="Nakagawa M."/>
            <person name="Sakamoto N."/>
            <person name="Oishi K."/>
            <person name="Kohara Y."/>
            <person name="Kobayashi M."/>
            <person name="Toyoda A."/>
            <person name="Sakaki Y."/>
            <person name="Sakurai T."/>
            <person name="Iida K."/>
            <person name="Akiyama K."/>
            <person name="Satou M."/>
            <person name="Toyoda T."/>
            <person name="Konagaya A."/>
            <person name="Carninci P."/>
            <person name="Kawai J."/>
            <person name="Hayashizaki Y."/>
            <person name="Shinozaki K."/>
        </authorList>
    </citation>
    <scope>NUCLEOTIDE SEQUENCE [LARGE SCALE MRNA]</scope>
    <source>
        <strain>cv. Columbia</strain>
    </source>
</reference>
<reference key="5">
    <citation type="submission" date="2002-03" db="EMBL/GenBank/DDBJ databases">
        <title>Full-length cDNA from Arabidopsis thaliana.</title>
        <authorList>
            <person name="Brover V.V."/>
            <person name="Troukhan M.E."/>
            <person name="Alexandrov N.A."/>
            <person name="Lu Y.-P."/>
            <person name="Flavell R.B."/>
            <person name="Feldmann K.A."/>
        </authorList>
    </citation>
    <scope>NUCLEOTIDE SEQUENCE [LARGE SCALE MRNA]</scope>
</reference>
<reference key="6">
    <citation type="journal article" date="2009" name="Plant Physiol.">
        <title>Large-scale Arabidopsis phosphoproteome profiling reveals novel chloroplast kinase substrates and phosphorylation networks.</title>
        <authorList>
            <person name="Reiland S."/>
            <person name="Messerli G."/>
            <person name="Baerenfaller K."/>
            <person name="Gerrits B."/>
            <person name="Endler A."/>
            <person name="Grossmann J."/>
            <person name="Gruissem W."/>
            <person name="Baginsky S."/>
        </authorList>
    </citation>
    <scope>IDENTIFICATION BY MASS SPECTROMETRY [LARGE SCALE ANALYSIS]</scope>
</reference>
<reference key="7">
    <citation type="journal article" date="2014" name="Cell Res.">
        <title>DUF221 proteins are a family of osmosensitive calcium-permeable cation channels conserved across eukaryotes.</title>
        <authorList>
            <person name="Hou C."/>
            <person name="Tian W."/>
            <person name="Kleist T."/>
            <person name="He K."/>
            <person name="Garcia V."/>
            <person name="Bai F."/>
            <person name="Hao Y."/>
            <person name="Luan S."/>
            <person name="Li L."/>
        </authorList>
    </citation>
    <scope>GENE FAMILY</scope>
</reference>
<reference key="8">
    <citation type="journal article" date="2014" name="Nature">
        <title>OSCA1 mediates osmotic-stress-evoked Ca(2+) increases vital for osmosensing in Arabidopsis.</title>
        <authorList>
            <person name="Yuan F."/>
            <person name="Yang H."/>
            <person name="Xue Y."/>
            <person name="Kong D."/>
            <person name="Ye R."/>
            <person name="Li C."/>
            <person name="Zhang J."/>
            <person name="Theprungsirikul L."/>
            <person name="Shrift T."/>
            <person name="Krichilsky B."/>
            <person name="Johnson D.M."/>
            <person name="Swift G.B."/>
            <person name="He Y."/>
            <person name="Siedow J.N."/>
            <person name="Pei Z.M."/>
        </authorList>
    </citation>
    <scope>GENE FAMILY</scope>
</reference>
<name>OSC22_ARATH</name>
<feature type="chain" id="PRO_0000429807" description="Hyperosmolality-gated Ca2+ permeable channel 2.2">
    <location>
        <begin position="1"/>
        <end position="762"/>
    </location>
</feature>
<feature type="transmembrane region" description="Helical" evidence="2">
    <location>
        <begin position="3"/>
        <end position="23"/>
    </location>
</feature>
<feature type="transmembrane region" description="Helical" evidence="2">
    <location>
        <begin position="90"/>
        <end position="110"/>
    </location>
</feature>
<feature type="transmembrane region" description="Helical" evidence="2">
    <location>
        <begin position="144"/>
        <end position="164"/>
    </location>
</feature>
<feature type="transmembrane region" description="Helical" evidence="2">
    <location>
        <begin position="354"/>
        <end position="374"/>
    </location>
</feature>
<feature type="transmembrane region" description="Helical" evidence="2">
    <location>
        <begin position="402"/>
        <end position="422"/>
    </location>
</feature>
<feature type="transmembrane region" description="Helical" evidence="2">
    <location>
        <begin position="445"/>
        <end position="465"/>
    </location>
</feature>
<feature type="transmembrane region" description="Helical" evidence="2">
    <location>
        <begin position="500"/>
        <end position="520"/>
    </location>
</feature>
<feature type="transmembrane region" description="Helical" evidence="2">
    <location>
        <begin position="557"/>
        <end position="577"/>
    </location>
</feature>
<feature type="transmembrane region" description="Helical" evidence="2">
    <location>
        <begin position="594"/>
        <end position="614"/>
    </location>
</feature>
<feature type="transmembrane region" description="Helical" evidence="2">
    <location>
        <begin position="615"/>
        <end position="635"/>
    </location>
</feature>
<feature type="sequence conflict" description="In Ref. 5; AAM63909." evidence="4" ref="5">
    <original>S</original>
    <variation>I</variation>
    <location>
        <position position="94"/>
    </location>
</feature>
<feature type="sequence conflict" description="In Ref. 4; BAD43330." evidence="4" ref="4">
    <original>P</original>
    <variation>L</variation>
    <location>
        <position position="195"/>
    </location>
</feature>
<feature type="sequence conflict" description="In Ref. 5; AAM63909." evidence="4" ref="5">
    <original>R</original>
    <variation>K</variation>
    <location>
        <position position="438"/>
    </location>
</feature>
<feature type="sequence conflict" description="In Ref. 5; AAM63909." evidence="4" ref="5">
    <original>L</original>
    <variation>F</variation>
    <location>
        <position position="471"/>
    </location>
</feature>
<accession>Q94A87</accession>
<accession>O80599</accession>
<accession>Q681Q0</accession>
<accession>Q8LC14</accession>
<organism>
    <name type="scientific">Arabidopsis thaliana</name>
    <name type="common">Mouse-ear cress</name>
    <dbReference type="NCBI Taxonomy" id="3702"/>
    <lineage>
        <taxon>Eukaryota</taxon>
        <taxon>Viridiplantae</taxon>
        <taxon>Streptophyta</taxon>
        <taxon>Embryophyta</taxon>
        <taxon>Tracheophyta</taxon>
        <taxon>Spermatophyta</taxon>
        <taxon>Magnoliopsida</taxon>
        <taxon>eudicotyledons</taxon>
        <taxon>Gunneridae</taxon>
        <taxon>Pentapetalae</taxon>
        <taxon>rosids</taxon>
        <taxon>malvids</taxon>
        <taxon>Brassicales</taxon>
        <taxon>Brassicaceae</taxon>
        <taxon>Camelineae</taxon>
        <taxon>Arabidopsis</taxon>
    </lineage>
</organism>
<evidence type="ECO:0000250" key="1">
    <source>
        <dbReference type="UniProtKB" id="Q5XEZ5"/>
    </source>
</evidence>
<evidence type="ECO:0000255" key="2"/>
<evidence type="ECO:0000303" key="3">
    <source>
    </source>
</evidence>
<evidence type="ECO:0000305" key="4"/>
<protein>
    <recommendedName>
        <fullName evidence="3">Hyperosmolality-gated Ca2+ permeable channel 2.2</fullName>
        <shortName evidence="3">AtOSCA2.2</shortName>
    </recommendedName>
</protein>